<feature type="chain" id="PRO_0000291011" description="NAD(P)H dehydrogenase (quinone)">
    <location>
        <begin position="1"/>
        <end position="200"/>
    </location>
</feature>
<feature type="domain" description="Flavodoxin-like" evidence="1">
    <location>
        <begin position="4"/>
        <end position="191"/>
    </location>
</feature>
<feature type="binding site" evidence="1">
    <location>
        <begin position="10"/>
        <end position="15"/>
    </location>
    <ligand>
        <name>FMN</name>
        <dbReference type="ChEBI" id="CHEBI:58210"/>
    </ligand>
</feature>
<feature type="binding site" evidence="1">
    <location>
        <position position="12"/>
    </location>
    <ligand>
        <name>NAD(+)</name>
        <dbReference type="ChEBI" id="CHEBI:57540"/>
    </ligand>
</feature>
<feature type="binding site" evidence="1">
    <location>
        <begin position="79"/>
        <end position="81"/>
    </location>
    <ligand>
        <name>FMN</name>
        <dbReference type="ChEBI" id="CHEBI:58210"/>
    </ligand>
</feature>
<feature type="binding site" evidence="1">
    <location>
        <position position="99"/>
    </location>
    <ligand>
        <name>substrate</name>
    </ligand>
</feature>
<feature type="binding site" evidence="1">
    <location>
        <begin position="114"/>
        <end position="120"/>
    </location>
    <ligand>
        <name>FMN</name>
        <dbReference type="ChEBI" id="CHEBI:58210"/>
    </ligand>
</feature>
<feature type="binding site" evidence="1">
    <location>
        <position position="135"/>
    </location>
    <ligand>
        <name>FMN</name>
        <dbReference type="ChEBI" id="CHEBI:58210"/>
    </ligand>
</feature>
<keyword id="KW-0285">Flavoprotein</keyword>
<keyword id="KW-0288">FMN</keyword>
<keyword id="KW-0520">NAD</keyword>
<keyword id="KW-0521">NADP</keyword>
<keyword id="KW-0547">Nucleotide-binding</keyword>
<keyword id="KW-0560">Oxidoreductase</keyword>
<dbReference type="EC" id="1.6.5.2" evidence="1"/>
<dbReference type="EMBL" id="CP000150">
    <property type="protein sequence ID" value="ABB06678.1"/>
    <property type="molecule type" value="Genomic_DNA"/>
</dbReference>
<dbReference type="RefSeq" id="WP_011350320.1">
    <property type="nucleotide sequence ID" value="NC_007509.1"/>
</dbReference>
<dbReference type="SMR" id="Q39LI8"/>
<dbReference type="GeneID" id="45092982"/>
<dbReference type="KEGG" id="bur:Bcep18194_C7634"/>
<dbReference type="PATRIC" id="fig|482957.22.peg.8250"/>
<dbReference type="HOGENOM" id="CLU_051402_0_2_4"/>
<dbReference type="Proteomes" id="UP000002705">
    <property type="component" value="Chromosome 3"/>
</dbReference>
<dbReference type="GO" id="GO:0016020">
    <property type="term" value="C:membrane"/>
    <property type="evidence" value="ECO:0007669"/>
    <property type="project" value="TreeGrafter"/>
</dbReference>
<dbReference type="GO" id="GO:0050660">
    <property type="term" value="F:flavin adenine dinucleotide binding"/>
    <property type="evidence" value="ECO:0007669"/>
    <property type="project" value="UniProtKB-UniRule"/>
</dbReference>
<dbReference type="GO" id="GO:0010181">
    <property type="term" value="F:FMN binding"/>
    <property type="evidence" value="ECO:0007669"/>
    <property type="project" value="InterPro"/>
</dbReference>
<dbReference type="GO" id="GO:0051287">
    <property type="term" value="F:NAD binding"/>
    <property type="evidence" value="ECO:0007669"/>
    <property type="project" value="UniProtKB-UniRule"/>
</dbReference>
<dbReference type="GO" id="GO:0050136">
    <property type="term" value="F:NADH:ubiquinone reductase (non-electrogenic) activity"/>
    <property type="evidence" value="ECO:0007669"/>
    <property type="project" value="RHEA"/>
</dbReference>
<dbReference type="GO" id="GO:0050661">
    <property type="term" value="F:NADP binding"/>
    <property type="evidence" value="ECO:0007669"/>
    <property type="project" value="UniProtKB-UniRule"/>
</dbReference>
<dbReference type="GO" id="GO:0008753">
    <property type="term" value="F:NADPH dehydrogenase (quinone) activity"/>
    <property type="evidence" value="ECO:0007669"/>
    <property type="project" value="RHEA"/>
</dbReference>
<dbReference type="FunFam" id="3.40.50.360:FF:000001">
    <property type="entry name" value="NAD(P)H dehydrogenase (Quinone) FQR1-like"/>
    <property type="match status" value="1"/>
</dbReference>
<dbReference type="Gene3D" id="3.40.50.360">
    <property type="match status" value="1"/>
</dbReference>
<dbReference type="HAMAP" id="MF_01017">
    <property type="entry name" value="NQOR"/>
    <property type="match status" value="1"/>
</dbReference>
<dbReference type="InterPro" id="IPR008254">
    <property type="entry name" value="Flavodoxin/NO_synth"/>
</dbReference>
<dbReference type="InterPro" id="IPR029039">
    <property type="entry name" value="Flavoprotein-like_sf"/>
</dbReference>
<dbReference type="InterPro" id="IPR010089">
    <property type="entry name" value="Flavoprotein_WrbA-like"/>
</dbReference>
<dbReference type="InterPro" id="IPR005025">
    <property type="entry name" value="FMN_Rdtase-like_dom"/>
</dbReference>
<dbReference type="InterPro" id="IPR037513">
    <property type="entry name" value="NQO"/>
</dbReference>
<dbReference type="NCBIfam" id="TIGR01755">
    <property type="entry name" value="flav_wrbA"/>
    <property type="match status" value="1"/>
</dbReference>
<dbReference type="NCBIfam" id="NF002999">
    <property type="entry name" value="PRK03767.1"/>
    <property type="match status" value="1"/>
</dbReference>
<dbReference type="PANTHER" id="PTHR30546">
    <property type="entry name" value="FLAVODOXIN-RELATED PROTEIN WRBA-RELATED"/>
    <property type="match status" value="1"/>
</dbReference>
<dbReference type="PANTHER" id="PTHR30546:SF23">
    <property type="entry name" value="FLAVOPROTEIN-LIKE PROTEIN YCP4-RELATED"/>
    <property type="match status" value="1"/>
</dbReference>
<dbReference type="Pfam" id="PF03358">
    <property type="entry name" value="FMN_red"/>
    <property type="match status" value="1"/>
</dbReference>
<dbReference type="SUPFAM" id="SSF52218">
    <property type="entry name" value="Flavoproteins"/>
    <property type="match status" value="1"/>
</dbReference>
<dbReference type="PROSITE" id="PS50902">
    <property type="entry name" value="FLAVODOXIN_LIKE"/>
    <property type="match status" value="1"/>
</dbReference>
<reference key="1">
    <citation type="submission" date="2005-10" db="EMBL/GenBank/DDBJ databases">
        <title>Complete sequence of chromosome 3 of Burkholderia sp. 383.</title>
        <authorList>
            <consortium name="US DOE Joint Genome Institute"/>
            <person name="Copeland A."/>
            <person name="Lucas S."/>
            <person name="Lapidus A."/>
            <person name="Barry K."/>
            <person name="Detter J.C."/>
            <person name="Glavina T."/>
            <person name="Hammon N."/>
            <person name="Israni S."/>
            <person name="Pitluck S."/>
            <person name="Chain P."/>
            <person name="Malfatti S."/>
            <person name="Shin M."/>
            <person name="Vergez L."/>
            <person name="Schmutz J."/>
            <person name="Larimer F."/>
            <person name="Land M."/>
            <person name="Kyrpides N."/>
            <person name="Lykidis A."/>
            <person name="Richardson P."/>
        </authorList>
    </citation>
    <scope>NUCLEOTIDE SEQUENCE [LARGE SCALE GENOMIC DNA]</scope>
    <source>
        <strain>ATCC 17760 / DSM 23089 / LMG 22485 / NCIMB 9086 / R18194 / 383</strain>
    </source>
</reference>
<accession>Q39LI8</accession>
<evidence type="ECO:0000255" key="1">
    <source>
        <dbReference type="HAMAP-Rule" id="MF_01017"/>
    </source>
</evidence>
<protein>
    <recommendedName>
        <fullName evidence="1">NAD(P)H dehydrogenase (quinone)</fullName>
        <ecNumber evidence="1">1.6.5.2</ecNumber>
    </recommendedName>
    <alternativeName>
        <fullName>Flavoprotein WrbA</fullName>
    </alternativeName>
    <alternativeName>
        <fullName evidence="1">NAD(P)H:quinone oxidoreductase</fullName>
        <shortName evidence="1">NQO</shortName>
    </alternativeName>
</protein>
<gene>
    <name type="ordered locus">Bcep18194_C7634</name>
</gene>
<sequence length="200" mass="20971">MAKVLVLYYSSYGHVETMAQHIAEGAKSVAGVEVTLKRVPETIPVDQARAIGVKVDQAAPVATVDELADYDAIIFGTPTRFGNMAGQMRTFLDQTGGLWMKGALVGKIGSVFASTGTQHGGQETTITSFHTTLLHHGMVIVGVPYACSGLVNMNEITGGTPYGATTLAGADGSRQPSANELDIARYQGKRVAELASKLAS</sequence>
<name>NQOR_BURL3</name>
<organism>
    <name type="scientific">Burkholderia lata (strain ATCC 17760 / DSM 23089 / LMG 22485 / NCIMB 9086 / R18194 / 383)</name>
    <dbReference type="NCBI Taxonomy" id="482957"/>
    <lineage>
        <taxon>Bacteria</taxon>
        <taxon>Pseudomonadati</taxon>
        <taxon>Pseudomonadota</taxon>
        <taxon>Betaproteobacteria</taxon>
        <taxon>Burkholderiales</taxon>
        <taxon>Burkholderiaceae</taxon>
        <taxon>Burkholderia</taxon>
        <taxon>Burkholderia cepacia complex</taxon>
    </lineage>
</organism>
<comment type="catalytic activity">
    <reaction evidence="1">
        <text>a quinone + NADH + H(+) = a quinol + NAD(+)</text>
        <dbReference type="Rhea" id="RHEA:46160"/>
        <dbReference type="ChEBI" id="CHEBI:15378"/>
        <dbReference type="ChEBI" id="CHEBI:24646"/>
        <dbReference type="ChEBI" id="CHEBI:57540"/>
        <dbReference type="ChEBI" id="CHEBI:57945"/>
        <dbReference type="ChEBI" id="CHEBI:132124"/>
        <dbReference type="EC" id="1.6.5.2"/>
    </reaction>
</comment>
<comment type="catalytic activity">
    <reaction evidence="1">
        <text>a quinone + NADPH + H(+) = a quinol + NADP(+)</text>
        <dbReference type="Rhea" id="RHEA:46164"/>
        <dbReference type="ChEBI" id="CHEBI:15378"/>
        <dbReference type="ChEBI" id="CHEBI:24646"/>
        <dbReference type="ChEBI" id="CHEBI:57783"/>
        <dbReference type="ChEBI" id="CHEBI:58349"/>
        <dbReference type="ChEBI" id="CHEBI:132124"/>
        <dbReference type="EC" id="1.6.5.2"/>
    </reaction>
</comment>
<comment type="cofactor">
    <cofactor evidence="1">
        <name>FMN</name>
        <dbReference type="ChEBI" id="CHEBI:58210"/>
    </cofactor>
    <text evidence="1">Binds 1 FMN per monomer.</text>
</comment>
<comment type="similarity">
    <text evidence="1">Belongs to the WrbA family.</text>
</comment>
<proteinExistence type="inferred from homology"/>